<dbReference type="EMBL" id="AE000513">
    <property type="protein sequence ID" value="AAF10400.1"/>
    <property type="molecule type" value="Genomic_DNA"/>
</dbReference>
<dbReference type="PIR" id="G75472">
    <property type="entry name" value="G75472"/>
</dbReference>
<dbReference type="RefSeq" id="NP_294549.1">
    <property type="nucleotide sequence ID" value="NC_001263.1"/>
</dbReference>
<dbReference type="RefSeq" id="WP_010887471.1">
    <property type="nucleotide sequence ID" value="NZ_JMLF01000005.1"/>
</dbReference>
<dbReference type="PDB" id="1NKW">
    <property type="method" value="X-ray"/>
    <property type="resolution" value="3.10 A"/>
    <property type="chains" value="Y=1-73"/>
</dbReference>
<dbReference type="PDB" id="1NWX">
    <property type="method" value="X-ray"/>
    <property type="resolution" value="3.50 A"/>
    <property type="chains" value="Y=1-73"/>
</dbReference>
<dbReference type="PDB" id="1NWY">
    <property type="method" value="X-ray"/>
    <property type="resolution" value="3.30 A"/>
    <property type="chains" value="Y=1-73"/>
</dbReference>
<dbReference type="PDB" id="1SM1">
    <property type="method" value="X-ray"/>
    <property type="resolution" value="3.42 A"/>
    <property type="chains" value="Y=1-73"/>
</dbReference>
<dbReference type="PDB" id="1XBP">
    <property type="method" value="X-ray"/>
    <property type="resolution" value="3.50 A"/>
    <property type="chains" value="Y=1-73"/>
</dbReference>
<dbReference type="PDB" id="4V49">
    <property type="method" value="X-ray"/>
    <property type="resolution" value="8.70 A"/>
    <property type="chains" value="Y=1-73"/>
</dbReference>
<dbReference type="PDB" id="4V4A">
    <property type="method" value="X-ray"/>
    <property type="resolution" value="9.50 A"/>
    <property type="chains" value="Y=1-73"/>
</dbReference>
<dbReference type="PDB" id="4V4G">
    <property type="method" value="X-ray"/>
    <property type="resolution" value="11.50 A"/>
    <property type="chains" value="1=1-73"/>
</dbReference>
<dbReference type="PDB" id="4V4R">
    <property type="method" value="X-ray"/>
    <property type="resolution" value="5.90 A"/>
    <property type="chains" value="B4=1-73"/>
</dbReference>
<dbReference type="PDB" id="4V4S">
    <property type="method" value="X-ray"/>
    <property type="resolution" value="6.76 A"/>
    <property type="chains" value="B4=1-73"/>
</dbReference>
<dbReference type="PDB" id="4V4T">
    <property type="method" value="X-ray"/>
    <property type="resolution" value="6.46 A"/>
    <property type="chains" value="4=1-73"/>
</dbReference>
<dbReference type="PDBsum" id="1NKW"/>
<dbReference type="PDBsum" id="1NWX"/>
<dbReference type="PDBsum" id="1NWY"/>
<dbReference type="PDBsum" id="1SM1"/>
<dbReference type="PDBsum" id="1XBP"/>
<dbReference type="PDBsum" id="4V49"/>
<dbReference type="PDBsum" id="4V4A"/>
<dbReference type="PDBsum" id="4V4G"/>
<dbReference type="PDBsum" id="4V4R"/>
<dbReference type="PDBsum" id="4V4S"/>
<dbReference type="PDBsum" id="4V4T"/>
<dbReference type="SMR" id="Q9RW44"/>
<dbReference type="FunCoup" id="Q9RW44">
    <property type="interactions" value="261"/>
</dbReference>
<dbReference type="IntAct" id="Q9RW44">
    <property type="interactions" value="1"/>
</dbReference>
<dbReference type="STRING" id="243230.DR_0825"/>
<dbReference type="PaxDb" id="243230-DR_0825"/>
<dbReference type="EnsemblBacteria" id="AAF10400">
    <property type="protein sequence ID" value="AAF10400"/>
    <property type="gene ID" value="DR_0825"/>
</dbReference>
<dbReference type="GeneID" id="69517069"/>
<dbReference type="KEGG" id="dra:DR_0825"/>
<dbReference type="PATRIC" id="fig|243230.17.peg.1006"/>
<dbReference type="eggNOG" id="COG0254">
    <property type="taxonomic scope" value="Bacteria"/>
</dbReference>
<dbReference type="HOGENOM" id="CLU_114306_4_2_0"/>
<dbReference type="InParanoid" id="Q9RW44"/>
<dbReference type="OrthoDB" id="9803251at2"/>
<dbReference type="EvolutionaryTrace" id="Q9RW44"/>
<dbReference type="Proteomes" id="UP000002524">
    <property type="component" value="Chromosome 1"/>
</dbReference>
<dbReference type="GO" id="GO:1990904">
    <property type="term" value="C:ribonucleoprotein complex"/>
    <property type="evidence" value="ECO:0007669"/>
    <property type="project" value="UniProtKB-KW"/>
</dbReference>
<dbReference type="GO" id="GO:0005840">
    <property type="term" value="C:ribosome"/>
    <property type="evidence" value="ECO:0007669"/>
    <property type="project" value="UniProtKB-KW"/>
</dbReference>
<dbReference type="GO" id="GO:0019843">
    <property type="term" value="F:rRNA binding"/>
    <property type="evidence" value="ECO:0007669"/>
    <property type="project" value="UniProtKB-KW"/>
</dbReference>
<dbReference type="GO" id="GO:0003735">
    <property type="term" value="F:structural constituent of ribosome"/>
    <property type="evidence" value="ECO:0007669"/>
    <property type="project" value="InterPro"/>
</dbReference>
<dbReference type="GO" id="GO:0000049">
    <property type="term" value="F:tRNA binding"/>
    <property type="evidence" value="ECO:0007669"/>
    <property type="project" value="UniProtKB-KW"/>
</dbReference>
<dbReference type="GO" id="GO:0006412">
    <property type="term" value="P:translation"/>
    <property type="evidence" value="ECO:0007669"/>
    <property type="project" value="UniProtKB-UniRule"/>
</dbReference>
<dbReference type="Gene3D" id="4.10.830.30">
    <property type="entry name" value="Ribosomal protein L31"/>
    <property type="match status" value="1"/>
</dbReference>
<dbReference type="HAMAP" id="MF_00501">
    <property type="entry name" value="Ribosomal_bL31_1"/>
    <property type="match status" value="1"/>
</dbReference>
<dbReference type="InterPro" id="IPR034704">
    <property type="entry name" value="Ribosomal_bL28/bL31-like_sf"/>
</dbReference>
<dbReference type="InterPro" id="IPR002150">
    <property type="entry name" value="Ribosomal_bL31"/>
</dbReference>
<dbReference type="InterPro" id="IPR027491">
    <property type="entry name" value="Ribosomal_bL31_A"/>
</dbReference>
<dbReference type="InterPro" id="IPR042105">
    <property type="entry name" value="Ribosomal_bL31_sf"/>
</dbReference>
<dbReference type="NCBIfam" id="TIGR00105">
    <property type="entry name" value="L31"/>
    <property type="match status" value="1"/>
</dbReference>
<dbReference type="NCBIfam" id="NF001809">
    <property type="entry name" value="PRK00528.1"/>
    <property type="match status" value="1"/>
</dbReference>
<dbReference type="PANTHER" id="PTHR33280">
    <property type="entry name" value="50S RIBOSOMAL PROTEIN L31, CHLOROPLASTIC"/>
    <property type="match status" value="1"/>
</dbReference>
<dbReference type="PANTHER" id="PTHR33280:SF1">
    <property type="entry name" value="LARGE RIBOSOMAL SUBUNIT PROTEIN BL31C"/>
    <property type="match status" value="1"/>
</dbReference>
<dbReference type="Pfam" id="PF01197">
    <property type="entry name" value="Ribosomal_L31"/>
    <property type="match status" value="1"/>
</dbReference>
<dbReference type="PRINTS" id="PR01249">
    <property type="entry name" value="RIBOSOMALL31"/>
</dbReference>
<dbReference type="SUPFAM" id="SSF143800">
    <property type="entry name" value="L28p-like"/>
    <property type="match status" value="1"/>
</dbReference>
<dbReference type="PROSITE" id="PS01143">
    <property type="entry name" value="RIBOSOMAL_L31"/>
    <property type="match status" value="1"/>
</dbReference>
<organism>
    <name type="scientific">Deinococcus radiodurans (strain ATCC 13939 / DSM 20539 / JCM 16871 / CCUG 27074 / LMG 4051 / NBRC 15346 / NCIMB 9279 / VKM B-1422 / R1)</name>
    <dbReference type="NCBI Taxonomy" id="243230"/>
    <lineage>
        <taxon>Bacteria</taxon>
        <taxon>Thermotogati</taxon>
        <taxon>Deinococcota</taxon>
        <taxon>Deinococci</taxon>
        <taxon>Deinococcales</taxon>
        <taxon>Deinococcaceae</taxon>
        <taxon>Deinococcus</taxon>
    </lineage>
</organism>
<accession>Q9RW44</accession>
<comment type="function">
    <text>Binds the 23S rRNA and interacts with the tRNA in the E site.</text>
</comment>
<comment type="subunit">
    <text evidence="1 2 3 4 5 6">Part of the 50S ribosomal subunit. Contacts protein L9.</text>
</comment>
<comment type="similarity">
    <text evidence="7">Belongs to the bacterial ribosomal protein bL31 family. Type A subfamily.</text>
</comment>
<proteinExistence type="evidence at protein level"/>
<gene>
    <name type="primary">rpmE</name>
    <name type="ordered locus">DR_0825</name>
</gene>
<sequence>MQKDLHPKAVPCKIIYQGQVVMETMSTRPEIHVDVWSGVHPFWTGEERFLDTEGRVDKFNKRFGDSYRRGSKK</sequence>
<evidence type="ECO:0000269" key="1">
    <source>
    </source>
</evidence>
<evidence type="ECO:0000269" key="2">
    <source>
    </source>
</evidence>
<evidence type="ECO:0000269" key="3">
    <source>
    </source>
</evidence>
<evidence type="ECO:0000269" key="4">
    <source>
    </source>
</evidence>
<evidence type="ECO:0000269" key="5">
    <source>
    </source>
</evidence>
<evidence type="ECO:0000269" key="6">
    <source>
    </source>
</evidence>
<evidence type="ECO:0000305" key="7"/>
<reference key="1">
    <citation type="journal article" date="1999" name="Science">
        <title>Genome sequence of the radioresistant bacterium Deinococcus radiodurans R1.</title>
        <authorList>
            <person name="White O."/>
            <person name="Eisen J.A."/>
            <person name="Heidelberg J.F."/>
            <person name="Hickey E.K."/>
            <person name="Peterson J.D."/>
            <person name="Dodson R.J."/>
            <person name="Haft D.H."/>
            <person name="Gwinn M.L."/>
            <person name="Nelson W.C."/>
            <person name="Richardson D.L."/>
            <person name="Moffat K.S."/>
            <person name="Qin H."/>
            <person name="Jiang L."/>
            <person name="Pamphile W."/>
            <person name="Crosby M."/>
            <person name="Shen M."/>
            <person name="Vamathevan J.J."/>
            <person name="Lam P."/>
            <person name="McDonald L.A."/>
            <person name="Utterback T.R."/>
            <person name="Zalewski C."/>
            <person name="Makarova K.S."/>
            <person name="Aravind L."/>
            <person name="Daly M.J."/>
            <person name="Minton K.W."/>
            <person name="Fleischmann R.D."/>
            <person name="Ketchum K.A."/>
            <person name="Nelson K.E."/>
            <person name="Salzberg S.L."/>
            <person name="Smith H.O."/>
            <person name="Venter J.C."/>
            <person name="Fraser C.M."/>
        </authorList>
    </citation>
    <scope>NUCLEOTIDE SEQUENCE [LARGE SCALE GENOMIC DNA]</scope>
    <source>
        <strain>ATCC 13939 / DSM 20539 / JCM 16871 / CCUG 27074 / LMG 4051 / NBRC 15346 / NCIMB 9279 / VKM B-1422 / R1</strain>
    </source>
</reference>
<reference key="2">
    <citation type="journal article" date="2001" name="Cell">
        <title>High resolution structure of the large ribosomal subunit from a mesophilic eubacterium.</title>
        <authorList>
            <person name="Harms J."/>
            <person name="Schluenzen F."/>
            <person name="Zarivach R."/>
            <person name="Bashan A."/>
            <person name="Gat S."/>
            <person name="Agmon I."/>
            <person name="Bartels H."/>
            <person name="Franceschi F."/>
            <person name="Yonath A."/>
        </authorList>
    </citation>
    <scope>X-RAY CRYSTALLOGRAPHY (3.1 ANGSTROMS) OF THE 50S SUBUNIT</scope>
    <scope>PROTEIN SEQUENCE OF 1-5</scope>
    <source>
        <strain>ATCC 13939 / DSM 20539 / JCM 16871 / CCUG 27074 / LMG 4051 / NBRC 15346 / NCIMB 9279 / VKM B-1422 / R1</strain>
    </source>
</reference>
<reference key="3">
    <citation type="journal article" date="2001" name="Nature">
        <title>Structural basis for the interaction of antibiotics with the peptidyl transferase centre in eubacteria.</title>
        <authorList>
            <person name="Schluenzen F."/>
            <person name="Zarivach R."/>
            <person name="Harms J."/>
            <person name="Bashan A."/>
            <person name="Tocilj A."/>
            <person name="Albrecht R."/>
            <person name="Yonath A."/>
            <person name="Franceschi F."/>
        </authorList>
    </citation>
    <scope>X-RAY CRYSTALLOGRAPHY (3.1 ANGSTROMS) OF THE 50S SUBUNIT IN COMPLEX WITH FIVE ANTIBIOTICS</scope>
    <source>
        <strain>ATCC 13939 / DSM 20539 / JCM 16871 / CCUG 27074 / LMG 4051 / NBRC 15346 / NCIMB 9279 / VKM B-1422 / R1</strain>
    </source>
</reference>
<reference key="4">
    <citation type="journal article" date="2003" name="Mol. Cell">
        <title>Structural basis of the ribosomal machinery for peptide bond formation, translocation, and nascent chain progression.</title>
        <authorList>
            <person name="Bashan A."/>
            <person name="Agmon I."/>
            <person name="Zarivach R."/>
            <person name="Schluenzen F."/>
            <person name="Harms J."/>
            <person name="Berisio R."/>
            <person name="Bartels H."/>
            <person name="Franceschi F."/>
            <person name="Auerbach T."/>
            <person name="Hansen H.A."/>
            <person name="Kossoy E."/>
            <person name="Kessler M."/>
            <person name="Yonath A."/>
        </authorList>
    </citation>
    <scope>X-RAY CRYSTALLOGRAPHY (3.5 ANGSTROMS) OF THE 50S SUBUNIT IN COMPLEX WITH TRNA MIMICS</scope>
    <source>
        <strain>ATCC 13939 / DSM 20539 / JCM 16871 / CCUG 27074 / LMG 4051 / NBRC 15346 / NCIMB 9279 / VKM B-1422 / R1</strain>
    </source>
</reference>
<reference key="5">
    <citation type="journal article" date="2003" name="Structure">
        <title>Structural basis for the antibiotic activity of ketolides and azalides.</title>
        <authorList>
            <person name="Schluenzen F."/>
            <person name="Harms J.M."/>
            <person name="Franceschi F."/>
            <person name="Hansen H.A."/>
            <person name="Bartels H."/>
            <person name="Zarivach R."/>
            <person name="Yonath A."/>
        </authorList>
    </citation>
    <scope>X-RAY CRYSTALLOGRAPHY (3.3 ANGSTROMS) OF THE 50S SUBUNIT IN COMPLEX WITH MODIFIED MACROLIDE ANTIBIOTICS</scope>
    <source>
        <strain>ATCC 13939 / DSM 20539 / JCM 16871 / CCUG 27074 / LMG 4051 / NBRC 15346 / NCIMB 9279 / VKM B-1422 / R1</strain>
    </source>
</reference>
<reference key="6">
    <citation type="journal article" date="2003" name="Nat. Struct. Biol.">
        <title>Structural insight into the role of the ribosomal tunnel in cellular regulation.</title>
        <authorList>
            <person name="Berisio R."/>
            <person name="Schluenzen F."/>
            <person name="Harms J."/>
            <person name="Bashan A."/>
            <person name="Auerbach T."/>
            <person name="Baram D."/>
            <person name="Yonath A."/>
        </authorList>
    </citation>
    <scope>X-RAY CRYSTALLOGRAPHY (3.4 ANGSTROMS) OF THE 50S SUBUNIT IN COMPLEX WITH TROLEANDOMYCIN</scope>
    <source>
        <strain>ATCC 13939 / DSM 20539 / JCM 16871 / CCUG 27074 / LMG 4051 / NBRC 15346 / NCIMB 9279 / VKM B-1422 / R1</strain>
    </source>
</reference>
<reference key="7">
    <citation type="journal article" date="2004" name="BMC Biol.">
        <title>Alterations at the peptidyl transferase centre of the ribosome induced by the synergistic action of the streptogramins dalfopristin and quinupristin.</title>
        <authorList>
            <person name="Harms J.M."/>
            <person name="Schluenzen F."/>
            <person name="Fucini P."/>
            <person name="Bartels H."/>
            <person name="Yonath A."/>
        </authorList>
    </citation>
    <scope>X-RAY CRYSTALLOGRAPHY (3.4 ANGSTROMS) OF THE 50S SUBUNIT IN COMPLEX WITH THE STREPTOGRAMINS QUINUPRISTIN AND DALFOPRISTIN</scope>
    <source>
        <strain>ATCC 13939 / DSM 20539 / JCM 16871 / CCUG 27074 / LMG 4051 / NBRC 15346 / NCIMB 9279 / VKM B-1422 / R1</strain>
    </source>
</reference>
<reference key="8">
    <citation type="journal article" date="2004" name="Mol. Microbiol.">
        <title>Inhibition of peptide bond formation by pleuromutilins: the structure of the 50S ribosomal subunit from Deinococcus radiodurans in complex with tiamulin.</title>
        <authorList>
            <person name="Schluenzen F."/>
            <person name="Pyetan E."/>
            <person name="Fucini P."/>
            <person name="Yonath A."/>
            <person name="Harms J.M."/>
        </authorList>
    </citation>
    <scope>X-RAY CRYSTALLOGRAPHY (3.5 ANGSTROMS) OF THE 50S SUBUNIT IN COMPLEX WITH TIAMULIN</scope>
    <source>
        <strain>ATCC 13939 / DSM 20539 / JCM 16871 / CCUG 27074 / LMG 4051 / NBRC 15346 / NCIMB 9279 / VKM B-1422 / R1</strain>
    </source>
</reference>
<name>RL31_DEIRA</name>
<feature type="chain" id="PRO_0000173099" description="Large ribosomal subunit protein bL31">
    <location>
        <begin position="1"/>
        <end position="73"/>
    </location>
</feature>
<keyword id="KW-0002">3D-structure</keyword>
<keyword id="KW-0903">Direct protein sequencing</keyword>
<keyword id="KW-1185">Reference proteome</keyword>
<keyword id="KW-0687">Ribonucleoprotein</keyword>
<keyword id="KW-0689">Ribosomal protein</keyword>
<keyword id="KW-0694">RNA-binding</keyword>
<keyword id="KW-0699">rRNA-binding</keyword>
<keyword id="KW-0820">tRNA-binding</keyword>
<protein>
    <recommendedName>
        <fullName evidence="7">Large ribosomal subunit protein bL31</fullName>
    </recommendedName>
    <alternativeName>
        <fullName>50S ribosomal protein L31</fullName>
    </alternativeName>
</protein>